<sequence>MPFVKIDLFEGRSQEQKNELAREVTEVVSRIAKAPKENIHVFINDMPEGTYYPQGELKKK</sequence>
<feature type="initiator methionine" description="Removed" evidence="1">
    <location>
        <position position="1"/>
    </location>
</feature>
<feature type="chain" id="PRO_0000209551" description="Probable tautomerase SAG1079">
    <location>
        <begin position="2"/>
        <end position="60"/>
    </location>
</feature>
<feature type="active site" description="Proton acceptor; via imino nitrogen" evidence="1">
    <location>
        <position position="2"/>
    </location>
</feature>
<protein>
    <recommendedName>
        <fullName>Probable tautomerase SAG1079</fullName>
        <ecNumber>5.3.2.-</ecNumber>
    </recommendedName>
</protein>
<accession>P67529</accession>
<accession>Q8DZM2</accession>
<accession>Q8E5C1</accession>
<name>Y1079_STRA5</name>
<reference key="1">
    <citation type="journal article" date="2002" name="Proc. Natl. Acad. Sci. U.S.A.">
        <title>Complete genome sequence and comparative genomic analysis of an emerging human pathogen, serotype V Streptococcus agalactiae.</title>
        <authorList>
            <person name="Tettelin H."/>
            <person name="Masignani V."/>
            <person name="Cieslewicz M.J."/>
            <person name="Eisen J.A."/>
            <person name="Peterson S.N."/>
            <person name="Wessels M.R."/>
            <person name="Paulsen I.T."/>
            <person name="Nelson K.E."/>
            <person name="Margarit I."/>
            <person name="Read T.D."/>
            <person name="Madoff L.C."/>
            <person name="Wolf A.M."/>
            <person name="Beanan M.J."/>
            <person name="Brinkac L.M."/>
            <person name="Daugherty S.C."/>
            <person name="DeBoy R.T."/>
            <person name="Durkin A.S."/>
            <person name="Kolonay J.F."/>
            <person name="Madupu R."/>
            <person name="Lewis M.R."/>
            <person name="Radune D."/>
            <person name="Fedorova N.B."/>
            <person name="Scanlan D."/>
            <person name="Khouri H.M."/>
            <person name="Mulligan S."/>
            <person name="Carty H.A."/>
            <person name="Cline R.T."/>
            <person name="Van Aken S.E."/>
            <person name="Gill J."/>
            <person name="Scarselli M."/>
            <person name="Mora M."/>
            <person name="Iacobini E.T."/>
            <person name="Brettoni C."/>
            <person name="Galli G."/>
            <person name="Mariani M."/>
            <person name="Vegni F."/>
            <person name="Maione D."/>
            <person name="Rinaudo D."/>
            <person name="Rappuoli R."/>
            <person name="Telford J.L."/>
            <person name="Kasper D.L."/>
            <person name="Grandi G."/>
            <person name="Fraser C.M."/>
        </authorList>
    </citation>
    <scope>NUCLEOTIDE SEQUENCE [LARGE SCALE GENOMIC DNA]</scope>
    <source>
        <strain>ATCC BAA-611 / 2603 V/R</strain>
    </source>
</reference>
<organism>
    <name type="scientific">Streptococcus agalactiae serotype V (strain ATCC BAA-611 / 2603 V/R)</name>
    <dbReference type="NCBI Taxonomy" id="208435"/>
    <lineage>
        <taxon>Bacteria</taxon>
        <taxon>Bacillati</taxon>
        <taxon>Bacillota</taxon>
        <taxon>Bacilli</taxon>
        <taxon>Lactobacillales</taxon>
        <taxon>Streptococcaceae</taxon>
        <taxon>Streptococcus</taxon>
    </lineage>
</organism>
<keyword id="KW-0413">Isomerase</keyword>
<keyword id="KW-1185">Reference proteome</keyword>
<comment type="similarity">
    <text evidence="2">Belongs to the 4-oxalocrotonate tautomerase family.</text>
</comment>
<evidence type="ECO:0000250" key="1"/>
<evidence type="ECO:0000305" key="2"/>
<dbReference type="EC" id="5.3.2.-"/>
<dbReference type="EMBL" id="AE009948">
    <property type="protein sequence ID" value="AAM99960.1"/>
    <property type="molecule type" value="Genomic_DNA"/>
</dbReference>
<dbReference type="RefSeq" id="NP_688088.1">
    <property type="nucleotide sequence ID" value="NC_004116.1"/>
</dbReference>
<dbReference type="RefSeq" id="WP_001117229.1">
    <property type="nucleotide sequence ID" value="NC_004116.1"/>
</dbReference>
<dbReference type="SMR" id="P67529"/>
<dbReference type="STRING" id="208435.SAG1079"/>
<dbReference type="KEGG" id="sag:SAG1079"/>
<dbReference type="PATRIC" id="fig|208435.3.peg.1088"/>
<dbReference type="HOGENOM" id="CLU_148073_5_1_9"/>
<dbReference type="OrthoDB" id="5405937at2"/>
<dbReference type="Proteomes" id="UP000000821">
    <property type="component" value="Chromosome"/>
</dbReference>
<dbReference type="GO" id="GO:0016853">
    <property type="term" value="F:isomerase activity"/>
    <property type="evidence" value="ECO:0007669"/>
    <property type="project" value="UniProtKB-KW"/>
</dbReference>
<dbReference type="Gene3D" id="3.30.429.10">
    <property type="entry name" value="Macrophage Migration Inhibitory Factor"/>
    <property type="match status" value="1"/>
</dbReference>
<dbReference type="InterPro" id="IPR004370">
    <property type="entry name" value="4-OT-like_dom"/>
</dbReference>
<dbReference type="InterPro" id="IPR014347">
    <property type="entry name" value="Tautomerase/MIF_sf"/>
</dbReference>
<dbReference type="NCBIfam" id="NF002571">
    <property type="entry name" value="PRK02220.1"/>
    <property type="match status" value="1"/>
</dbReference>
<dbReference type="NCBIfam" id="NF002622">
    <property type="entry name" value="PRK02289.1"/>
    <property type="match status" value="1"/>
</dbReference>
<dbReference type="PANTHER" id="PTHR35530:SF1">
    <property type="entry name" value="2-HYDROXYMUCONATE TAUTOMERASE"/>
    <property type="match status" value="1"/>
</dbReference>
<dbReference type="PANTHER" id="PTHR35530">
    <property type="entry name" value="TAUTOMERASE-RELATED"/>
    <property type="match status" value="1"/>
</dbReference>
<dbReference type="Pfam" id="PF01361">
    <property type="entry name" value="Tautomerase"/>
    <property type="match status" value="1"/>
</dbReference>
<dbReference type="SUPFAM" id="SSF55331">
    <property type="entry name" value="Tautomerase/MIF"/>
    <property type="match status" value="1"/>
</dbReference>
<proteinExistence type="inferred from homology"/>
<gene>
    <name type="ordered locus">SAG1079</name>
</gene>